<reference key="1">
    <citation type="submission" date="2000-03" db="EMBL/GenBank/DDBJ databases">
        <title>Mouse Hoxa6 gene structure and regulation.</title>
        <authorList>
            <person name="Tan D.P."/>
            <person name="Shao X."/>
            <person name="Peterkofsky A."/>
        </authorList>
    </citation>
    <scope>NUCLEOTIDE SEQUENCE [GENOMIC DNA]</scope>
    <source>
        <strain>ICR X Swiss Webster</strain>
        <tissue>Liver</tissue>
    </source>
</reference>
<reference key="2">
    <citation type="journal article" date="1985" name="Cell">
        <title>Clustered homeo boxes are differentially expressed during murine development.</title>
        <authorList>
            <person name="Colberg-Poley A.M."/>
            <person name="Voss S.D."/>
            <person name="Chowdhury K."/>
            <person name="Stewart C.L."/>
            <person name="Wagner E.F."/>
            <person name="Gruss P."/>
        </authorList>
    </citation>
    <scope>NUCLEOTIDE SEQUENCE [GENOMIC DNA] OF 136-232</scope>
</reference>
<proteinExistence type="inferred from homology"/>
<feature type="chain" id="PRO_0000200068" description="Homeobox protein Hox-A6">
    <location>
        <begin position="1"/>
        <end position="232"/>
    </location>
</feature>
<feature type="DNA-binding region" description="Homeobox" evidence="1">
    <location>
        <begin position="154"/>
        <end position="213"/>
    </location>
</feature>
<feature type="region of interest" description="Disordered" evidence="2">
    <location>
        <begin position="88"/>
        <end position="126"/>
    </location>
</feature>
<feature type="short sequence motif" description="Antp-type hexapeptide">
    <location>
        <begin position="135"/>
        <end position="140"/>
    </location>
</feature>
<feature type="sequence conflict" description="In Ref. 2." evidence="3" ref="2">
    <original>YPWMQRMNSCA</original>
    <variation>ASLIRTSFLPT</variation>
    <location>
        <begin position="136"/>
        <end position="146"/>
    </location>
</feature>
<name>HXA6_MOUSE</name>
<dbReference type="EMBL" id="AF247663">
    <property type="protein sequence ID" value="AAF97512.1"/>
    <property type="molecule type" value="Genomic_DNA"/>
</dbReference>
<dbReference type="EMBL" id="M11988">
    <property type="protein sequence ID" value="AAA37830.1"/>
    <property type="molecule type" value="Genomic_DNA"/>
</dbReference>
<dbReference type="CCDS" id="CCDS20144.1"/>
<dbReference type="PIR" id="A24779">
    <property type="entry name" value="A24779"/>
</dbReference>
<dbReference type="RefSeq" id="NP_034584.1">
    <property type="nucleotide sequence ID" value="NM_010454.3"/>
</dbReference>
<dbReference type="SMR" id="P09092"/>
<dbReference type="BioGRID" id="200371">
    <property type="interactions" value="6"/>
</dbReference>
<dbReference type="FunCoup" id="P09092">
    <property type="interactions" value="1243"/>
</dbReference>
<dbReference type="IntAct" id="P09092">
    <property type="interactions" value="6"/>
</dbReference>
<dbReference type="STRING" id="10090.ENSMUSP00000058755"/>
<dbReference type="PhosphoSitePlus" id="P09092"/>
<dbReference type="PaxDb" id="10090-ENSMUSP00000058755"/>
<dbReference type="ProteomicsDB" id="273058"/>
<dbReference type="Pumba" id="P09092"/>
<dbReference type="Antibodypedia" id="1430">
    <property type="antibodies" value="245 antibodies from 29 providers"/>
</dbReference>
<dbReference type="DNASU" id="15403"/>
<dbReference type="Ensembl" id="ENSMUST00000062829.9">
    <property type="protein sequence ID" value="ENSMUSP00000058755.8"/>
    <property type="gene ID" value="ENSMUSG00000043219.10"/>
</dbReference>
<dbReference type="GeneID" id="15403"/>
<dbReference type="KEGG" id="mmu:15403"/>
<dbReference type="UCSC" id="uc009byi.1">
    <property type="organism name" value="mouse"/>
</dbReference>
<dbReference type="AGR" id="MGI:96178"/>
<dbReference type="CTD" id="3203"/>
<dbReference type="MGI" id="MGI:96178">
    <property type="gene designation" value="Hoxa6"/>
</dbReference>
<dbReference type="VEuPathDB" id="HostDB:ENSMUSG00000043219"/>
<dbReference type="eggNOG" id="KOG0489">
    <property type="taxonomic scope" value="Eukaryota"/>
</dbReference>
<dbReference type="GeneTree" id="ENSGT00940000161585"/>
<dbReference type="HOGENOM" id="CLU_061398_1_1_1"/>
<dbReference type="InParanoid" id="P09092"/>
<dbReference type="OMA" id="YSSPCFY"/>
<dbReference type="OrthoDB" id="6159439at2759"/>
<dbReference type="PhylomeDB" id="P09092"/>
<dbReference type="TreeFam" id="TF316310"/>
<dbReference type="BioGRID-ORCS" id="15403">
    <property type="hits" value="3 hits in 75 CRISPR screens"/>
</dbReference>
<dbReference type="PRO" id="PR:P09092"/>
<dbReference type="Proteomes" id="UP000000589">
    <property type="component" value="Chromosome 6"/>
</dbReference>
<dbReference type="RNAct" id="P09092">
    <property type="molecule type" value="protein"/>
</dbReference>
<dbReference type="Bgee" id="ENSMUSG00000043219">
    <property type="expression patterns" value="Expressed in embryonic post-anal tail and 73 other cell types or tissues"/>
</dbReference>
<dbReference type="ExpressionAtlas" id="P09092">
    <property type="expression patterns" value="baseline and differential"/>
</dbReference>
<dbReference type="GO" id="GO:0016607">
    <property type="term" value="C:nuclear speck"/>
    <property type="evidence" value="ECO:0007669"/>
    <property type="project" value="Ensembl"/>
</dbReference>
<dbReference type="GO" id="GO:0000981">
    <property type="term" value="F:DNA-binding transcription factor activity, RNA polymerase II-specific"/>
    <property type="evidence" value="ECO:0007669"/>
    <property type="project" value="InterPro"/>
</dbReference>
<dbReference type="GO" id="GO:1990837">
    <property type="term" value="F:sequence-specific double-stranded DNA binding"/>
    <property type="evidence" value="ECO:0007669"/>
    <property type="project" value="Ensembl"/>
</dbReference>
<dbReference type="GO" id="GO:0009952">
    <property type="term" value="P:anterior/posterior pattern specification"/>
    <property type="evidence" value="ECO:0000315"/>
    <property type="project" value="MGI"/>
</dbReference>
<dbReference type="GO" id="GO:0048706">
    <property type="term" value="P:embryonic skeletal system development"/>
    <property type="evidence" value="ECO:0000316"/>
    <property type="project" value="MGI"/>
</dbReference>
<dbReference type="CDD" id="cd00086">
    <property type="entry name" value="homeodomain"/>
    <property type="match status" value="1"/>
</dbReference>
<dbReference type="FunFam" id="1.10.10.60:FF:000879">
    <property type="match status" value="1"/>
</dbReference>
<dbReference type="Gene3D" id="1.10.10.60">
    <property type="entry name" value="Homeodomain-like"/>
    <property type="match status" value="1"/>
</dbReference>
<dbReference type="InterPro" id="IPR050296">
    <property type="entry name" value="Antp_homeobox"/>
</dbReference>
<dbReference type="InterPro" id="IPR001356">
    <property type="entry name" value="HD"/>
</dbReference>
<dbReference type="InterPro" id="IPR020479">
    <property type="entry name" value="HD_metazoa"/>
</dbReference>
<dbReference type="InterPro" id="IPR017995">
    <property type="entry name" value="Homeobox_antennapedia"/>
</dbReference>
<dbReference type="InterPro" id="IPR001827">
    <property type="entry name" value="Homeobox_Antennapedia_CS"/>
</dbReference>
<dbReference type="InterPro" id="IPR017970">
    <property type="entry name" value="Homeobox_CS"/>
</dbReference>
<dbReference type="InterPro" id="IPR009057">
    <property type="entry name" value="Homeodomain-like_sf"/>
</dbReference>
<dbReference type="PANTHER" id="PTHR45659">
    <property type="entry name" value="HOMEOBOX PROTEIN HOX"/>
    <property type="match status" value="1"/>
</dbReference>
<dbReference type="PANTHER" id="PTHR45659:SF14">
    <property type="entry name" value="HOMEOBOX PROTEIN HOX-A6"/>
    <property type="match status" value="1"/>
</dbReference>
<dbReference type="Pfam" id="PF00046">
    <property type="entry name" value="Homeodomain"/>
    <property type="match status" value="1"/>
</dbReference>
<dbReference type="PRINTS" id="PR00025">
    <property type="entry name" value="ANTENNAPEDIA"/>
</dbReference>
<dbReference type="PRINTS" id="PR00024">
    <property type="entry name" value="HOMEOBOX"/>
</dbReference>
<dbReference type="SMART" id="SM00389">
    <property type="entry name" value="HOX"/>
    <property type="match status" value="1"/>
</dbReference>
<dbReference type="SUPFAM" id="SSF46689">
    <property type="entry name" value="Homeodomain-like"/>
    <property type="match status" value="1"/>
</dbReference>
<dbReference type="PROSITE" id="PS00032">
    <property type="entry name" value="ANTENNAPEDIA"/>
    <property type="match status" value="1"/>
</dbReference>
<dbReference type="PROSITE" id="PS00027">
    <property type="entry name" value="HOMEOBOX_1"/>
    <property type="match status" value="1"/>
</dbReference>
<dbReference type="PROSITE" id="PS50071">
    <property type="entry name" value="HOMEOBOX_2"/>
    <property type="match status" value="1"/>
</dbReference>
<sequence>MSSYFVNPTFPGSLPSGQDSFLGQLPLYPAGYDALRPFPASYGASSLPDKTYTSPCFYQQSNSVLACNRASYEYGASCFYSDKDLSGASPSGNNKQRGPGDYLHFSPEQQYKPDGSVQGKALHEEGTDRKYTSPVYPWMQRMNSCAGAVYGSHGRRGRQTYTRYQTLELEKEFHFNRYLTRRRRIEIANALCLTERQIKIWFQNRRMKWKKENKLINSTQASGEDSEAKAGE</sequence>
<comment type="function">
    <text>Sequence-specific transcription factor which is part of a developmental regulatory system that provides cells with specific positional identities on the anterior-posterior axis.</text>
</comment>
<comment type="subcellular location">
    <subcellularLocation>
        <location>Nucleus</location>
    </subcellularLocation>
</comment>
<comment type="similarity">
    <text evidence="3">Belongs to the Antp homeobox family.</text>
</comment>
<organism>
    <name type="scientific">Mus musculus</name>
    <name type="common">Mouse</name>
    <dbReference type="NCBI Taxonomy" id="10090"/>
    <lineage>
        <taxon>Eukaryota</taxon>
        <taxon>Metazoa</taxon>
        <taxon>Chordata</taxon>
        <taxon>Craniata</taxon>
        <taxon>Vertebrata</taxon>
        <taxon>Euteleostomi</taxon>
        <taxon>Mammalia</taxon>
        <taxon>Eutheria</taxon>
        <taxon>Euarchontoglires</taxon>
        <taxon>Glires</taxon>
        <taxon>Rodentia</taxon>
        <taxon>Myomorpha</taxon>
        <taxon>Muroidea</taxon>
        <taxon>Muridae</taxon>
        <taxon>Murinae</taxon>
        <taxon>Mus</taxon>
        <taxon>Mus</taxon>
    </lineage>
</organism>
<accession>P09092</accession>
<accession>Q9JI98</accession>
<protein>
    <recommendedName>
        <fullName>Homeobox protein Hox-A6</fullName>
    </recommendedName>
    <alternativeName>
        <fullName>Homeobox protein Hox-1.2</fullName>
    </alternativeName>
    <alternativeName>
        <fullName>Homeobox protein M5-4</fullName>
    </alternativeName>
</protein>
<keyword id="KW-0217">Developmental protein</keyword>
<keyword id="KW-0238">DNA-binding</keyword>
<keyword id="KW-0371">Homeobox</keyword>
<keyword id="KW-0539">Nucleus</keyword>
<keyword id="KW-1185">Reference proteome</keyword>
<keyword id="KW-0804">Transcription</keyword>
<keyword id="KW-0805">Transcription regulation</keyword>
<evidence type="ECO:0000255" key="1">
    <source>
        <dbReference type="PROSITE-ProRule" id="PRU00108"/>
    </source>
</evidence>
<evidence type="ECO:0000256" key="2">
    <source>
        <dbReference type="SAM" id="MobiDB-lite"/>
    </source>
</evidence>
<evidence type="ECO:0000305" key="3"/>
<gene>
    <name type="primary">Hoxa6</name>
    <name type="synonym">Hox-1.2</name>
    <name type="synonym">Hoxa-6</name>
</gene>